<dbReference type="EMBL" id="CP000813">
    <property type="protein sequence ID" value="ABV60812.1"/>
    <property type="molecule type" value="Genomic_DNA"/>
</dbReference>
<dbReference type="RefSeq" id="WP_012008706.1">
    <property type="nucleotide sequence ID" value="NZ_VEIS01000020.1"/>
</dbReference>
<dbReference type="SMR" id="A8F995"/>
<dbReference type="STRING" id="315750.BPUM_0112"/>
<dbReference type="GeneID" id="5619354"/>
<dbReference type="KEGG" id="bpu:BPUM_0112"/>
<dbReference type="eggNOG" id="COG0093">
    <property type="taxonomic scope" value="Bacteria"/>
</dbReference>
<dbReference type="HOGENOM" id="CLU_095071_2_1_9"/>
<dbReference type="OrthoDB" id="9806379at2"/>
<dbReference type="Proteomes" id="UP000001355">
    <property type="component" value="Chromosome"/>
</dbReference>
<dbReference type="GO" id="GO:0022625">
    <property type="term" value="C:cytosolic large ribosomal subunit"/>
    <property type="evidence" value="ECO:0007669"/>
    <property type="project" value="TreeGrafter"/>
</dbReference>
<dbReference type="GO" id="GO:0070180">
    <property type="term" value="F:large ribosomal subunit rRNA binding"/>
    <property type="evidence" value="ECO:0007669"/>
    <property type="project" value="TreeGrafter"/>
</dbReference>
<dbReference type="GO" id="GO:0003735">
    <property type="term" value="F:structural constituent of ribosome"/>
    <property type="evidence" value="ECO:0007669"/>
    <property type="project" value="InterPro"/>
</dbReference>
<dbReference type="GO" id="GO:0006412">
    <property type="term" value="P:translation"/>
    <property type="evidence" value="ECO:0007669"/>
    <property type="project" value="UniProtKB-UniRule"/>
</dbReference>
<dbReference type="CDD" id="cd00337">
    <property type="entry name" value="Ribosomal_uL14"/>
    <property type="match status" value="1"/>
</dbReference>
<dbReference type="FunFam" id="2.40.150.20:FF:000001">
    <property type="entry name" value="50S ribosomal protein L14"/>
    <property type="match status" value="1"/>
</dbReference>
<dbReference type="Gene3D" id="2.40.150.20">
    <property type="entry name" value="Ribosomal protein L14"/>
    <property type="match status" value="1"/>
</dbReference>
<dbReference type="HAMAP" id="MF_01367">
    <property type="entry name" value="Ribosomal_uL14"/>
    <property type="match status" value="1"/>
</dbReference>
<dbReference type="InterPro" id="IPR000218">
    <property type="entry name" value="Ribosomal_uL14"/>
</dbReference>
<dbReference type="InterPro" id="IPR005745">
    <property type="entry name" value="Ribosomal_uL14_bac-type"/>
</dbReference>
<dbReference type="InterPro" id="IPR019972">
    <property type="entry name" value="Ribosomal_uL14_CS"/>
</dbReference>
<dbReference type="InterPro" id="IPR036853">
    <property type="entry name" value="Ribosomal_uL14_sf"/>
</dbReference>
<dbReference type="NCBIfam" id="TIGR01067">
    <property type="entry name" value="rplN_bact"/>
    <property type="match status" value="1"/>
</dbReference>
<dbReference type="PANTHER" id="PTHR11761">
    <property type="entry name" value="50S/60S RIBOSOMAL PROTEIN L14/L23"/>
    <property type="match status" value="1"/>
</dbReference>
<dbReference type="PANTHER" id="PTHR11761:SF3">
    <property type="entry name" value="LARGE RIBOSOMAL SUBUNIT PROTEIN UL14M"/>
    <property type="match status" value="1"/>
</dbReference>
<dbReference type="Pfam" id="PF00238">
    <property type="entry name" value="Ribosomal_L14"/>
    <property type="match status" value="1"/>
</dbReference>
<dbReference type="SMART" id="SM01374">
    <property type="entry name" value="Ribosomal_L14"/>
    <property type="match status" value="1"/>
</dbReference>
<dbReference type="SUPFAM" id="SSF50193">
    <property type="entry name" value="Ribosomal protein L14"/>
    <property type="match status" value="1"/>
</dbReference>
<dbReference type="PROSITE" id="PS00049">
    <property type="entry name" value="RIBOSOMAL_L14"/>
    <property type="match status" value="1"/>
</dbReference>
<feature type="chain" id="PRO_1000068004" description="Large ribosomal subunit protein uL14">
    <location>
        <begin position="1"/>
        <end position="122"/>
    </location>
</feature>
<proteinExistence type="inferred from homology"/>
<name>RL14_BACP2</name>
<sequence>MIQQETRLKVADNSGAREVLTIKVLGGSGRKTANIGDVIVCTVKQATPGGVVKKGEVVKAVIVRTKSGARRNDGSYISFDENACVIIRDDKSPRGTRIFGPVARELRDNNYMKIVSLAPEVL</sequence>
<reference key="1">
    <citation type="journal article" date="2007" name="PLoS ONE">
        <title>Paradoxical DNA repair and peroxide resistance gene conservation in Bacillus pumilus SAFR-032.</title>
        <authorList>
            <person name="Gioia J."/>
            <person name="Yerrapragada S."/>
            <person name="Qin X."/>
            <person name="Jiang H."/>
            <person name="Igboeli O.C."/>
            <person name="Muzny D."/>
            <person name="Dugan-Rocha S."/>
            <person name="Ding Y."/>
            <person name="Hawes A."/>
            <person name="Liu W."/>
            <person name="Perez L."/>
            <person name="Kovar C."/>
            <person name="Dinh H."/>
            <person name="Lee S."/>
            <person name="Nazareth L."/>
            <person name="Blyth P."/>
            <person name="Holder M."/>
            <person name="Buhay C."/>
            <person name="Tirumalai M.R."/>
            <person name="Liu Y."/>
            <person name="Dasgupta I."/>
            <person name="Bokhetache L."/>
            <person name="Fujita M."/>
            <person name="Karouia F."/>
            <person name="Eswara Moorthy P."/>
            <person name="Siefert J."/>
            <person name="Uzman A."/>
            <person name="Buzumbo P."/>
            <person name="Verma A."/>
            <person name="Zwiya H."/>
            <person name="McWilliams B.D."/>
            <person name="Olowu A."/>
            <person name="Clinkenbeard K.D."/>
            <person name="Newcombe D."/>
            <person name="Golebiewski L."/>
            <person name="Petrosino J.F."/>
            <person name="Nicholson W.L."/>
            <person name="Fox G.E."/>
            <person name="Venkateswaran K."/>
            <person name="Highlander S.K."/>
            <person name="Weinstock G.M."/>
        </authorList>
    </citation>
    <scope>NUCLEOTIDE SEQUENCE [LARGE SCALE GENOMIC DNA]</scope>
    <source>
        <strain>SAFR-032</strain>
    </source>
</reference>
<evidence type="ECO:0000255" key="1">
    <source>
        <dbReference type="HAMAP-Rule" id="MF_01367"/>
    </source>
</evidence>
<evidence type="ECO:0000305" key="2"/>
<gene>
    <name evidence="1" type="primary">rplN</name>
    <name type="ordered locus">BPUM_0112</name>
</gene>
<organism>
    <name type="scientific">Bacillus pumilus (strain SAFR-032)</name>
    <dbReference type="NCBI Taxonomy" id="315750"/>
    <lineage>
        <taxon>Bacteria</taxon>
        <taxon>Bacillati</taxon>
        <taxon>Bacillota</taxon>
        <taxon>Bacilli</taxon>
        <taxon>Bacillales</taxon>
        <taxon>Bacillaceae</taxon>
        <taxon>Bacillus</taxon>
    </lineage>
</organism>
<protein>
    <recommendedName>
        <fullName evidence="1">Large ribosomal subunit protein uL14</fullName>
    </recommendedName>
    <alternativeName>
        <fullName evidence="2">50S ribosomal protein L14</fullName>
    </alternativeName>
</protein>
<keyword id="KW-0687">Ribonucleoprotein</keyword>
<keyword id="KW-0689">Ribosomal protein</keyword>
<keyword id="KW-0694">RNA-binding</keyword>
<keyword id="KW-0699">rRNA-binding</keyword>
<accession>A8F995</accession>
<comment type="function">
    <text evidence="1">Binds to 23S rRNA. Forms part of two intersubunit bridges in the 70S ribosome.</text>
</comment>
<comment type="subunit">
    <text evidence="1">Part of the 50S ribosomal subunit. Forms a cluster with proteins L3 and L19. In the 70S ribosome, L14 and L19 interact and together make contacts with the 16S rRNA in bridges B5 and B8.</text>
</comment>
<comment type="similarity">
    <text evidence="1">Belongs to the universal ribosomal protein uL14 family.</text>
</comment>